<name>EFP_RHOCS</name>
<organism>
    <name type="scientific">Rhodospirillum centenum (strain ATCC 51521 / SW)</name>
    <dbReference type="NCBI Taxonomy" id="414684"/>
    <lineage>
        <taxon>Bacteria</taxon>
        <taxon>Pseudomonadati</taxon>
        <taxon>Pseudomonadota</taxon>
        <taxon>Alphaproteobacteria</taxon>
        <taxon>Rhodospirillales</taxon>
        <taxon>Rhodospirillaceae</taxon>
        <taxon>Rhodospirillum</taxon>
    </lineage>
</organism>
<evidence type="ECO:0000255" key="1">
    <source>
        <dbReference type="HAMAP-Rule" id="MF_00141"/>
    </source>
</evidence>
<accession>B6INP2</accession>
<comment type="function">
    <text evidence="1">Involved in peptide bond synthesis. Stimulates efficient translation and peptide-bond synthesis on native or reconstituted 70S ribosomes in vitro. Probably functions indirectly by altering the affinity of the ribosome for aminoacyl-tRNA, thus increasing their reactivity as acceptors for peptidyl transferase.</text>
</comment>
<comment type="pathway">
    <text evidence="1">Protein biosynthesis; polypeptide chain elongation.</text>
</comment>
<comment type="subcellular location">
    <subcellularLocation>
        <location evidence="1">Cytoplasm</location>
    </subcellularLocation>
</comment>
<comment type="similarity">
    <text evidence="1">Belongs to the elongation factor P family.</text>
</comment>
<reference key="1">
    <citation type="submission" date="2007-03" db="EMBL/GenBank/DDBJ databases">
        <title>Genome sequence of Rhodospirillum centenum.</title>
        <authorList>
            <person name="Touchman J.W."/>
            <person name="Bauer C."/>
            <person name="Blankenship R.E."/>
        </authorList>
    </citation>
    <scope>NUCLEOTIDE SEQUENCE [LARGE SCALE GENOMIC DNA]</scope>
    <source>
        <strain>ATCC 51521 / SW</strain>
    </source>
</reference>
<sequence>MKVNANTMRKGHILEDGGKLYVITAANIVQPGKGGAFIQLEMKDVRTGTKTSMRFRTQETVERARLDEHEMSFLFAEGDQYTFMDKESFEQVTIPGDVIGDGKVFLQDGMEVVVQSFEGAPLSVELPQTVTLRIVEADPVVKGQTASSSYKPAVLENGVRVLVPPHVDAGTRIVVNVEDGTYLERAKD</sequence>
<gene>
    <name evidence="1" type="primary">efp</name>
    <name type="ordered locus">RC1_1830</name>
</gene>
<dbReference type="EMBL" id="CP000613">
    <property type="protein sequence ID" value="ACI99226.1"/>
    <property type="molecule type" value="Genomic_DNA"/>
</dbReference>
<dbReference type="RefSeq" id="WP_012567011.1">
    <property type="nucleotide sequence ID" value="NC_011420.2"/>
</dbReference>
<dbReference type="SMR" id="B6INP2"/>
<dbReference type="STRING" id="414684.RC1_1830"/>
<dbReference type="KEGG" id="rce:RC1_1830"/>
<dbReference type="eggNOG" id="COG0231">
    <property type="taxonomic scope" value="Bacteria"/>
</dbReference>
<dbReference type="HOGENOM" id="CLU_074944_1_1_5"/>
<dbReference type="OrthoDB" id="9801844at2"/>
<dbReference type="UniPathway" id="UPA00345"/>
<dbReference type="Proteomes" id="UP000001591">
    <property type="component" value="Chromosome"/>
</dbReference>
<dbReference type="GO" id="GO:0005737">
    <property type="term" value="C:cytoplasm"/>
    <property type="evidence" value="ECO:0007669"/>
    <property type="project" value="UniProtKB-SubCell"/>
</dbReference>
<dbReference type="GO" id="GO:0003746">
    <property type="term" value="F:translation elongation factor activity"/>
    <property type="evidence" value="ECO:0007669"/>
    <property type="project" value="UniProtKB-UniRule"/>
</dbReference>
<dbReference type="GO" id="GO:0043043">
    <property type="term" value="P:peptide biosynthetic process"/>
    <property type="evidence" value="ECO:0007669"/>
    <property type="project" value="InterPro"/>
</dbReference>
<dbReference type="CDD" id="cd04470">
    <property type="entry name" value="S1_EF-P_repeat_1"/>
    <property type="match status" value="1"/>
</dbReference>
<dbReference type="CDD" id="cd05794">
    <property type="entry name" value="S1_EF-P_repeat_2"/>
    <property type="match status" value="1"/>
</dbReference>
<dbReference type="FunFam" id="2.40.50.140:FF:000004">
    <property type="entry name" value="Elongation factor P"/>
    <property type="match status" value="1"/>
</dbReference>
<dbReference type="FunFam" id="2.40.50.140:FF:000009">
    <property type="entry name" value="Elongation factor P"/>
    <property type="match status" value="1"/>
</dbReference>
<dbReference type="Gene3D" id="2.30.30.30">
    <property type="match status" value="1"/>
</dbReference>
<dbReference type="Gene3D" id="2.40.50.140">
    <property type="entry name" value="Nucleic acid-binding proteins"/>
    <property type="match status" value="2"/>
</dbReference>
<dbReference type="HAMAP" id="MF_00141">
    <property type="entry name" value="EF_P"/>
    <property type="match status" value="1"/>
</dbReference>
<dbReference type="InterPro" id="IPR015365">
    <property type="entry name" value="Elong-fact-P_C"/>
</dbReference>
<dbReference type="InterPro" id="IPR012340">
    <property type="entry name" value="NA-bd_OB-fold"/>
</dbReference>
<dbReference type="InterPro" id="IPR014722">
    <property type="entry name" value="Rib_uL2_dom2"/>
</dbReference>
<dbReference type="InterPro" id="IPR020599">
    <property type="entry name" value="Transl_elong_fac_P/YeiP"/>
</dbReference>
<dbReference type="InterPro" id="IPR013185">
    <property type="entry name" value="Transl_elong_KOW-like"/>
</dbReference>
<dbReference type="InterPro" id="IPR001059">
    <property type="entry name" value="Transl_elong_P/YeiP_cen"/>
</dbReference>
<dbReference type="InterPro" id="IPR013852">
    <property type="entry name" value="Transl_elong_P/YeiP_CS"/>
</dbReference>
<dbReference type="InterPro" id="IPR011768">
    <property type="entry name" value="Transl_elongation_fac_P"/>
</dbReference>
<dbReference type="InterPro" id="IPR008991">
    <property type="entry name" value="Translation_prot_SH3-like_sf"/>
</dbReference>
<dbReference type="NCBIfam" id="TIGR00038">
    <property type="entry name" value="efp"/>
    <property type="match status" value="1"/>
</dbReference>
<dbReference type="NCBIfam" id="NF001810">
    <property type="entry name" value="PRK00529.1"/>
    <property type="match status" value="1"/>
</dbReference>
<dbReference type="PANTHER" id="PTHR30053">
    <property type="entry name" value="ELONGATION FACTOR P"/>
    <property type="match status" value="1"/>
</dbReference>
<dbReference type="PANTHER" id="PTHR30053:SF14">
    <property type="entry name" value="TRANSLATION ELONGATION FACTOR KOW-LIKE DOMAIN-CONTAINING PROTEIN"/>
    <property type="match status" value="1"/>
</dbReference>
<dbReference type="Pfam" id="PF01132">
    <property type="entry name" value="EFP"/>
    <property type="match status" value="1"/>
</dbReference>
<dbReference type="Pfam" id="PF08207">
    <property type="entry name" value="EFP_N"/>
    <property type="match status" value="1"/>
</dbReference>
<dbReference type="Pfam" id="PF09285">
    <property type="entry name" value="Elong-fact-P_C"/>
    <property type="match status" value="1"/>
</dbReference>
<dbReference type="PIRSF" id="PIRSF005901">
    <property type="entry name" value="EF-P"/>
    <property type="match status" value="1"/>
</dbReference>
<dbReference type="SMART" id="SM01185">
    <property type="entry name" value="EFP"/>
    <property type="match status" value="1"/>
</dbReference>
<dbReference type="SMART" id="SM00841">
    <property type="entry name" value="Elong-fact-P_C"/>
    <property type="match status" value="1"/>
</dbReference>
<dbReference type="SUPFAM" id="SSF50249">
    <property type="entry name" value="Nucleic acid-binding proteins"/>
    <property type="match status" value="2"/>
</dbReference>
<dbReference type="SUPFAM" id="SSF50104">
    <property type="entry name" value="Translation proteins SH3-like domain"/>
    <property type="match status" value="1"/>
</dbReference>
<dbReference type="PROSITE" id="PS01275">
    <property type="entry name" value="EFP"/>
    <property type="match status" value="1"/>
</dbReference>
<protein>
    <recommendedName>
        <fullName evidence="1">Elongation factor P</fullName>
        <shortName evidence="1">EF-P</shortName>
    </recommendedName>
</protein>
<proteinExistence type="inferred from homology"/>
<feature type="chain" id="PRO_1000096195" description="Elongation factor P">
    <location>
        <begin position="1"/>
        <end position="188"/>
    </location>
</feature>
<keyword id="KW-0963">Cytoplasm</keyword>
<keyword id="KW-0251">Elongation factor</keyword>
<keyword id="KW-0648">Protein biosynthesis</keyword>
<keyword id="KW-1185">Reference proteome</keyword>